<protein>
    <recommendedName>
        <fullName evidence="2">Apidaecin +A</fullName>
    </recommendedName>
    <component>
        <recommendedName>
            <fullName evidence="2">Apidaecin -A</fullName>
        </recommendedName>
    </component>
</protein>
<organism evidence="2">
    <name type="scientific">Bombus terrestris</name>
    <name type="common">Buff-tailed bumblebee</name>
    <name type="synonym">Apis terrestris</name>
    <dbReference type="NCBI Taxonomy" id="30195"/>
    <lineage>
        <taxon>Eukaryota</taxon>
        <taxon>Metazoa</taxon>
        <taxon>Ecdysozoa</taxon>
        <taxon>Arthropoda</taxon>
        <taxon>Hexapoda</taxon>
        <taxon>Insecta</taxon>
        <taxon>Pterygota</taxon>
        <taxon>Neoptera</taxon>
        <taxon>Endopterygota</taxon>
        <taxon>Hymenoptera</taxon>
        <taxon>Apocrita</taxon>
        <taxon>Aculeata</taxon>
        <taxon>Apoidea</taxon>
        <taxon>Anthophila</taxon>
        <taxon>Apidae</taxon>
        <taxon>Bombus</taxon>
        <taxon>Bombus</taxon>
    </lineage>
</organism>
<accession>C0HKX3</accession>
<name>APD_BOMTE</name>
<dbReference type="Proteomes" id="UP000835206">
    <property type="component" value="Unplaced"/>
</dbReference>
<dbReference type="GO" id="GO:0005615">
    <property type="term" value="C:extracellular space"/>
    <property type="evidence" value="ECO:0000314"/>
    <property type="project" value="UniProtKB"/>
</dbReference>
<dbReference type="GO" id="GO:0050829">
    <property type="term" value="P:defense response to Gram-negative bacterium"/>
    <property type="evidence" value="ECO:0000314"/>
    <property type="project" value="UniProtKB"/>
</dbReference>
<dbReference type="GO" id="GO:0045087">
    <property type="term" value="P:innate immune response"/>
    <property type="evidence" value="ECO:0007669"/>
    <property type="project" value="UniProtKB-KW"/>
</dbReference>
<dbReference type="InterPro" id="IPR004828">
    <property type="entry name" value="Apidaecin"/>
</dbReference>
<dbReference type="Pfam" id="PF00807">
    <property type="entry name" value="Apidaecin"/>
    <property type="match status" value="1"/>
</dbReference>
<proteinExistence type="evidence at protein level"/>
<feature type="peptide" id="PRO_0000441341" description="Apidaecin +A" evidence="1">
    <location>
        <begin position="1"/>
        <end position="17"/>
    </location>
</feature>
<feature type="peptide" id="PRO_0000441342" description="Apidaecin -A" evidence="1">
    <location>
        <begin position="2"/>
        <end position="17"/>
    </location>
</feature>
<keyword id="KW-0044">Antibiotic</keyword>
<keyword id="KW-0929">Antimicrobial</keyword>
<keyword id="KW-0903">Direct protein sequencing</keyword>
<keyword id="KW-0391">Immunity</keyword>
<keyword id="KW-0399">Innate immunity</keyword>
<keyword id="KW-0964">Secreted</keyword>
<reference evidence="3" key="1">
    <citation type="journal article" date="1994" name="J. Biol. Chem.">
        <title>Biodiversity of apidaecin-type peptide antibiotics. Prospects of manipulating the antibacterial spectrum and combating acquired resistance.</title>
        <authorList>
            <person name="Casteels P."/>
            <person name="Romagnolo J."/>
            <person name="Castle M."/>
            <person name="Casteels-Josson K."/>
            <person name="Erdjument-Bromage H."/>
            <person name="Tempst P."/>
        </authorList>
    </citation>
    <scope>PROTEIN SEQUENCE</scope>
    <scope>FUNCTION</scope>
    <scope>SUBCELLULAR LOCATION</scope>
    <scope>INDUCTION</scope>
    <scope>MASS SPECTROMETRY</scope>
    <source>
        <tissue evidence="2">Hemolymph</tissue>
    </source>
</reference>
<comment type="function">
    <text evidence="1">Antimicrobial peptide active against many Gram-negative enterobacterial and plant-associated bacterial species. Not active against other bacterial species like H.pylori, P.mirabilis, B.pertussis or N.gonorrhoeae.</text>
</comment>
<comment type="subcellular location">
    <subcellularLocation>
        <location evidence="1">Secreted</location>
    </subcellularLocation>
</comment>
<comment type="induction">
    <text evidence="1">By bacterial infection.</text>
</comment>
<comment type="mass spectrometry">
    <molecule>Apidaecin +A</molecule>
    <text>Apidaecin Bb +A.</text>
</comment>
<comment type="mass spectrometry">
    <molecule>Apidaecin -A</molecule>
    <text>Apidaecin Bb - A.</text>
</comment>
<comment type="similarity">
    <text evidence="3">Belongs to the apidaecin family.</text>
</comment>
<evidence type="ECO:0000269" key="1">
    <source>
    </source>
</evidence>
<evidence type="ECO:0000303" key="2">
    <source>
    </source>
</evidence>
<evidence type="ECO:0000305" key="3"/>
<sequence>ANRPVYIPPPRPPHPRL</sequence>